<accession>Q0T157</accession>
<proteinExistence type="inferred from homology"/>
<comment type="function">
    <text evidence="1">Converts the aldose L-fucose into the corresponding ketose L-fuculose.</text>
</comment>
<comment type="catalytic activity">
    <reaction evidence="1">
        <text>L-fucose = L-fuculose</text>
        <dbReference type="Rhea" id="RHEA:17233"/>
        <dbReference type="ChEBI" id="CHEBI:2181"/>
        <dbReference type="ChEBI" id="CHEBI:17617"/>
        <dbReference type="EC" id="5.3.1.25"/>
    </reaction>
</comment>
<comment type="cofactor">
    <cofactor evidence="1">
        <name>Mn(2+)</name>
        <dbReference type="ChEBI" id="CHEBI:29035"/>
    </cofactor>
</comment>
<comment type="pathway">
    <text evidence="1">Carbohydrate degradation; L-fucose degradation; L-lactaldehyde and glycerone phosphate from L-fucose: step 1/3.</text>
</comment>
<comment type="subunit">
    <text evidence="1">Homohexamer.</text>
</comment>
<comment type="subcellular location">
    <subcellularLocation>
        <location evidence="1">Cytoplasm</location>
    </subcellularLocation>
</comment>
<comment type="similarity">
    <text evidence="1">Belongs to the L-fucose isomerase family.</text>
</comment>
<evidence type="ECO:0000255" key="1">
    <source>
        <dbReference type="HAMAP-Rule" id="MF_01254"/>
    </source>
</evidence>
<organism>
    <name type="scientific">Shigella flexneri serotype 5b (strain 8401)</name>
    <dbReference type="NCBI Taxonomy" id="373384"/>
    <lineage>
        <taxon>Bacteria</taxon>
        <taxon>Pseudomonadati</taxon>
        <taxon>Pseudomonadota</taxon>
        <taxon>Gammaproteobacteria</taxon>
        <taxon>Enterobacterales</taxon>
        <taxon>Enterobacteriaceae</taxon>
        <taxon>Shigella</taxon>
    </lineage>
</organism>
<protein>
    <recommendedName>
        <fullName evidence="1">L-fucose isomerase</fullName>
        <ecNumber evidence="1">5.3.1.25</ecNumber>
    </recommendedName>
    <alternativeName>
        <fullName evidence="1">6-deoxy-L-galactose isomerase</fullName>
    </alternativeName>
    <alternativeName>
        <fullName>FucIase</fullName>
    </alternativeName>
</protein>
<feature type="chain" id="PRO_1000067226" description="L-fucose isomerase">
    <location>
        <begin position="1"/>
        <end position="591"/>
    </location>
</feature>
<feature type="active site" description="Proton acceptor" evidence="1">
    <location>
        <position position="337"/>
    </location>
</feature>
<feature type="active site" description="Proton acceptor" evidence="1">
    <location>
        <position position="361"/>
    </location>
</feature>
<feature type="binding site" evidence="1">
    <location>
        <position position="337"/>
    </location>
    <ligand>
        <name>Mn(2+)</name>
        <dbReference type="ChEBI" id="CHEBI:29035"/>
    </ligand>
</feature>
<feature type="binding site" evidence="1">
    <location>
        <position position="361"/>
    </location>
    <ligand>
        <name>Mn(2+)</name>
        <dbReference type="ChEBI" id="CHEBI:29035"/>
    </ligand>
</feature>
<feature type="binding site" evidence="1">
    <location>
        <position position="528"/>
    </location>
    <ligand>
        <name>Mn(2+)</name>
        <dbReference type="ChEBI" id="CHEBI:29035"/>
    </ligand>
</feature>
<keyword id="KW-0119">Carbohydrate metabolism</keyword>
<keyword id="KW-0963">Cytoplasm</keyword>
<keyword id="KW-0294">Fucose metabolism</keyword>
<keyword id="KW-0413">Isomerase</keyword>
<keyword id="KW-0464">Manganese</keyword>
<keyword id="KW-0479">Metal-binding</keyword>
<reference key="1">
    <citation type="journal article" date="2006" name="BMC Genomics">
        <title>Complete genome sequence of Shigella flexneri 5b and comparison with Shigella flexneri 2a.</title>
        <authorList>
            <person name="Nie H."/>
            <person name="Yang F."/>
            <person name="Zhang X."/>
            <person name="Yang J."/>
            <person name="Chen L."/>
            <person name="Wang J."/>
            <person name="Xiong Z."/>
            <person name="Peng J."/>
            <person name="Sun L."/>
            <person name="Dong J."/>
            <person name="Xue Y."/>
            <person name="Xu X."/>
            <person name="Chen S."/>
            <person name="Yao Z."/>
            <person name="Shen Y."/>
            <person name="Jin Q."/>
        </authorList>
    </citation>
    <scope>NUCLEOTIDE SEQUENCE [LARGE SCALE GENOMIC DNA]</scope>
    <source>
        <strain>8401</strain>
    </source>
</reference>
<gene>
    <name evidence="1" type="primary">fucI</name>
    <name type="ordered locus">SFV_2881</name>
</gene>
<dbReference type="EC" id="5.3.1.25" evidence="1"/>
<dbReference type="EMBL" id="CP000266">
    <property type="protein sequence ID" value="ABF04958.1"/>
    <property type="molecule type" value="Genomic_DNA"/>
</dbReference>
<dbReference type="RefSeq" id="WP_000724153.1">
    <property type="nucleotide sequence ID" value="NC_008258.1"/>
</dbReference>
<dbReference type="SMR" id="Q0T157"/>
<dbReference type="GeneID" id="75172886"/>
<dbReference type="KEGG" id="sfv:SFV_2881"/>
<dbReference type="HOGENOM" id="CLU_033326_1_0_6"/>
<dbReference type="UniPathway" id="UPA00563">
    <property type="reaction ID" value="UER00624"/>
</dbReference>
<dbReference type="Proteomes" id="UP000000659">
    <property type="component" value="Chromosome"/>
</dbReference>
<dbReference type="GO" id="GO:0005737">
    <property type="term" value="C:cytoplasm"/>
    <property type="evidence" value="ECO:0007669"/>
    <property type="project" value="UniProtKB-SubCell"/>
</dbReference>
<dbReference type="GO" id="GO:0008790">
    <property type="term" value="F:arabinose isomerase activity"/>
    <property type="evidence" value="ECO:0007669"/>
    <property type="project" value="TreeGrafter"/>
</dbReference>
<dbReference type="GO" id="GO:0008736">
    <property type="term" value="F:L-fucose isomerase activity"/>
    <property type="evidence" value="ECO:0007669"/>
    <property type="project" value="UniProtKB-UniRule"/>
</dbReference>
<dbReference type="GO" id="GO:0030145">
    <property type="term" value="F:manganese ion binding"/>
    <property type="evidence" value="ECO:0007669"/>
    <property type="project" value="UniProtKB-UniRule"/>
</dbReference>
<dbReference type="GO" id="GO:0019571">
    <property type="term" value="P:D-arabinose catabolic process"/>
    <property type="evidence" value="ECO:0007669"/>
    <property type="project" value="TreeGrafter"/>
</dbReference>
<dbReference type="GO" id="GO:0042355">
    <property type="term" value="P:L-fucose catabolic process"/>
    <property type="evidence" value="ECO:0007669"/>
    <property type="project" value="UniProtKB-UniRule"/>
</dbReference>
<dbReference type="CDD" id="cd03556">
    <property type="entry name" value="L-fucose_isomerase"/>
    <property type="match status" value="1"/>
</dbReference>
<dbReference type="FunFam" id="3.20.14.10:FF:000001">
    <property type="entry name" value="L-fucose isomerase"/>
    <property type="match status" value="1"/>
</dbReference>
<dbReference type="FunFam" id="3.40.275.10:FF:000001">
    <property type="entry name" value="L-fucose isomerase"/>
    <property type="match status" value="1"/>
</dbReference>
<dbReference type="FunFam" id="3.40.50.1070:FF:000001">
    <property type="entry name" value="L-fucose isomerase"/>
    <property type="match status" value="1"/>
</dbReference>
<dbReference type="Gene3D" id="3.40.50.1070">
    <property type="match status" value="1"/>
</dbReference>
<dbReference type="Gene3D" id="3.40.275.10">
    <property type="entry name" value="L-fucose Isomerase, Chain A, domain 2"/>
    <property type="match status" value="1"/>
</dbReference>
<dbReference type="Gene3D" id="3.20.14.10">
    <property type="entry name" value="L-fucose/L-arabinose isomerase, C-terminal"/>
    <property type="match status" value="1"/>
</dbReference>
<dbReference type="HAMAP" id="MF_01254">
    <property type="entry name" value="Fucose_iso"/>
    <property type="match status" value="1"/>
</dbReference>
<dbReference type="InterPro" id="IPR004216">
    <property type="entry name" value="Fuc/Ara_isomerase_C"/>
</dbReference>
<dbReference type="InterPro" id="IPR038393">
    <property type="entry name" value="Fuc_iso_dom3_sf"/>
</dbReference>
<dbReference type="InterPro" id="IPR015888">
    <property type="entry name" value="Fuc_isomerase_C"/>
</dbReference>
<dbReference type="InterPro" id="IPR038391">
    <property type="entry name" value="Fucose_iso_dom1_sf"/>
</dbReference>
<dbReference type="InterPro" id="IPR012888">
    <property type="entry name" value="Fucose_iso_N1"/>
</dbReference>
<dbReference type="InterPro" id="IPR005763">
    <property type="entry name" value="Fucose_isomerase"/>
</dbReference>
<dbReference type="InterPro" id="IPR038392">
    <property type="entry name" value="Fucose_isomerase_dom2_sf"/>
</dbReference>
<dbReference type="InterPro" id="IPR009015">
    <property type="entry name" value="Fucose_isomerase_N/cen_sf"/>
</dbReference>
<dbReference type="InterPro" id="IPR012889">
    <property type="entry name" value="Fucose_isomerase_N2"/>
</dbReference>
<dbReference type="NCBIfam" id="TIGR01089">
    <property type="entry name" value="fucI"/>
    <property type="match status" value="1"/>
</dbReference>
<dbReference type="NCBIfam" id="NF008220">
    <property type="entry name" value="PRK10991.1"/>
    <property type="match status" value="1"/>
</dbReference>
<dbReference type="PANTHER" id="PTHR37840">
    <property type="entry name" value="L-FUCOSE ISOMERASE"/>
    <property type="match status" value="1"/>
</dbReference>
<dbReference type="PANTHER" id="PTHR37840:SF1">
    <property type="entry name" value="L-FUCOSE ISOMERASE"/>
    <property type="match status" value="1"/>
</dbReference>
<dbReference type="Pfam" id="PF02952">
    <property type="entry name" value="Fucose_iso_C"/>
    <property type="match status" value="1"/>
</dbReference>
<dbReference type="Pfam" id="PF07881">
    <property type="entry name" value="Fucose_iso_N1"/>
    <property type="match status" value="1"/>
</dbReference>
<dbReference type="Pfam" id="PF07882">
    <property type="entry name" value="Fucose_iso_N2"/>
    <property type="match status" value="1"/>
</dbReference>
<dbReference type="SUPFAM" id="SSF50443">
    <property type="entry name" value="FucI/AraA C-terminal domain-like"/>
    <property type="match status" value="1"/>
</dbReference>
<dbReference type="SUPFAM" id="SSF53743">
    <property type="entry name" value="FucI/AraA N-terminal and middle domains"/>
    <property type="match status" value="1"/>
</dbReference>
<name>FUCI_SHIF8</name>
<sequence length="591" mass="64977">MKKISLPKIGIRPVIDGRRMGVRESLEEQTMNMAKATAALLTEKLRHACGAAVECVISDTCIAGMAEAAACEEKFSSQNVGLTITVTPCWCYGSETIDMDPTRPKAIWGFNGTERPGAVYLAAALAAHSQKGIPAFSIYGHDVQDADDTSIPADVEEKLLRFARAGLAVASMKGKSYLSLGGVSMGIAGSIVDHNFFESWLGMKVQAVDMTELRRRIDQKIYDEAELEMALAWADKNFRYGEDENNKQYQRNAEQSRAVLRESLLMAMCIRDMMQGNSKLADIGRVEESLGYNAIAAGFQGQRHWTDQYPNGDTAEAILNSSFDWNGVREPFVVATENDSLNGVAMLMGHQLTGTAQVFADVRTYWSPEAIERVTGHKLDGLAEHGIIHLINSGSAALDGSCKQRDSEGNPTMKPHWEISQQEADACLAATEWCPAIHEYFRGGGYSSRFLTEGGVPFTMTRVNIIKGLGPVLQIAEGWSVELPKDVHDILNKRTNSTWPTTWFAPRLTGKGPFTDVYSVMANWGANHGVLTIGHVGADFITLASMLRIPVCMHNVEETKVYRPSAWAAHGMDIEGQDYRACQNYGPLYKR</sequence>